<proteinExistence type="evidence at transcript level"/>
<protein>
    <recommendedName>
        <fullName evidence="3">Cytochrome P450 monooxygenase astJ</fullName>
        <ecNumber evidence="5">1.-.-.-</ecNumber>
    </recommendedName>
    <alternativeName>
        <fullName evidence="3">Astellolide biosynthesis cluster protein J</fullName>
    </alternativeName>
</protein>
<name>ASTJ_ASPOR</name>
<sequence length="500" mass="57391">MSRRFPIQVAQSEIPPIAWGLWRMVYRLWLHPLSGYPGPRLAAVSNLPYFAWTCTGNLHLRLQELHKVYGDVIRIRPNALTYRTPEAWTDIYGHRKPGTLPFSKDPEFFMPAQAGSSHMINANEKDHTRQKRLLNHAFSERSLRQQEHLIMGYIDLFIQRLRGQARMGAETVNMEEWLNFLTFDIIGDLAFGEPFGCLQNSEYHPWVATIFKSIKTGAILRALNIYPILLGFIRRFLPKSLVQKRIAHYQMSKDRVTRRLQTETSRPDFISYILKYNDDRGMSTPEIEMNAALLIQAGSETTATVLAACLYFLQKNAACHRRLVQDIRSAFTQETDINFLSAAQLPYMNGVIEESLRLFPPAPGIGPRVVPKGGARICGRYVPGGVSVSVGHYSTFRSARNFTRPNEFLPQRWLDRDAESEFASDQTMALQPFSYGPRACIGRNLAYAEMRTILAKILWHFDVQLDERSADWANSKSYIVWEKGPLWLKLHPRNVPQETD</sequence>
<comment type="function">
    <text evidence="2">Cytochrome P450 monooxygenase; part of the gene cluster that mediates the biosynthesis of astellolides, drimane-type sesquiterpene esters that show antimicrobial, anti-inflammatory, and anti-tumor activities (PubMed:27628599). The first step in astellolide biosynthesis is performed by the sesquiterpene cyclase astC that catalyzes the formation of drimanyl pyrophosphate from farnesyl pyrophosphate (PubMed:27628599). Drimanyl pyrophosphate is then dephosphorylated by the sesquiterpene phosphatase astI to produce drimanyl monophosphate which is further dephosphorylated to drim-8-ene-11-ol by atsK (PubMed:27628599). Drim-8-ene-11-ol is converted to confertifolin, probably by the cytochrome P450 monooxygenase astD and/or the dehydrogenase astE (PubMed:27628599). The cytochrome P450 monooxygenases astB, astF and astJ then hydroxylate confertifolin at C6, C14, or C15 to form trihydroxy confertifolin (PubMed:27628599). The nonribosomal peptide synthetase astA catalyzes ester bond formation between trihydroxy contifolin and benzoic acid (BA) or 4-hydroxy benzoic acid (4HBA), leading to the formation of dideacetyl astellolides A and B, respectively (PubMed:27628599). Finally, the O-acetyltransferase astG converts dideacetyl astellolides A and B into deacetyl astellolides A and B (PubMed:27628599).</text>
</comment>
<comment type="cofactor">
    <cofactor evidence="1">
        <name>heme</name>
        <dbReference type="ChEBI" id="CHEBI:30413"/>
    </cofactor>
</comment>
<comment type="pathway">
    <text evidence="2">Secondary metabolite biosynthesis; terpenoid biosynthesis.</text>
</comment>
<comment type="induction">
    <text evidence="2">Expression is regulated by the secondary metabolite regulator cclA.</text>
</comment>
<comment type="disruption phenotype">
    <text evidence="2">Impairs the production of trihydroxy confertifolin and deacetyl astellolides A and B.</text>
</comment>
<comment type="similarity">
    <text evidence="4">Belongs to the cytochrome P450 family.</text>
</comment>
<gene>
    <name evidence="3" type="primary">astJ</name>
    <name type="ORF">AO090026000575</name>
</gene>
<accession>Q2UEL1</accession>
<keyword id="KW-0349">Heme</keyword>
<keyword id="KW-0408">Iron</keyword>
<keyword id="KW-0479">Metal-binding</keyword>
<keyword id="KW-0503">Monooxygenase</keyword>
<keyword id="KW-0560">Oxidoreductase</keyword>
<keyword id="KW-1185">Reference proteome</keyword>
<dbReference type="EC" id="1.-.-.-" evidence="5"/>
<dbReference type="EMBL" id="BA000051">
    <property type="protein sequence ID" value="BAE60004.1"/>
    <property type="molecule type" value="Genomic_DNA"/>
</dbReference>
<dbReference type="SMR" id="Q2UEL1"/>
<dbReference type="STRING" id="510516.Q2UEL1"/>
<dbReference type="EnsemblFungi" id="BAE60004">
    <property type="protein sequence ID" value="BAE60004"/>
    <property type="gene ID" value="AO090026000575"/>
</dbReference>
<dbReference type="HOGENOM" id="CLU_001570_14_11_1"/>
<dbReference type="OMA" id="WANSKSY"/>
<dbReference type="UniPathway" id="UPA00213"/>
<dbReference type="Proteomes" id="UP000006564">
    <property type="component" value="Chromosome 3"/>
</dbReference>
<dbReference type="GO" id="GO:0020037">
    <property type="term" value="F:heme binding"/>
    <property type="evidence" value="ECO:0007669"/>
    <property type="project" value="InterPro"/>
</dbReference>
<dbReference type="GO" id="GO:0005506">
    <property type="term" value="F:iron ion binding"/>
    <property type="evidence" value="ECO:0007669"/>
    <property type="project" value="InterPro"/>
</dbReference>
<dbReference type="GO" id="GO:0004497">
    <property type="term" value="F:monooxygenase activity"/>
    <property type="evidence" value="ECO:0007669"/>
    <property type="project" value="UniProtKB-KW"/>
</dbReference>
<dbReference type="GO" id="GO:0016705">
    <property type="term" value="F:oxidoreductase activity, acting on paired donors, with incorporation or reduction of molecular oxygen"/>
    <property type="evidence" value="ECO:0007669"/>
    <property type="project" value="InterPro"/>
</dbReference>
<dbReference type="GO" id="GO:0016114">
    <property type="term" value="P:terpenoid biosynthetic process"/>
    <property type="evidence" value="ECO:0007669"/>
    <property type="project" value="UniProtKB-UniPathway"/>
</dbReference>
<dbReference type="CDD" id="cd11058">
    <property type="entry name" value="CYP60B-like"/>
    <property type="match status" value="1"/>
</dbReference>
<dbReference type="FunFam" id="1.10.630.10:FF:000047">
    <property type="entry name" value="Cytochrome P450 monooxygenase"/>
    <property type="match status" value="1"/>
</dbReference>
<dbReference type="Gene3D" id="1.10.630.10">
    <property type="entry name" value="Cytochrome P450"/>
    <property type="match status" value="1"/>
</dbReference>
<dbReference type="InterPro" id="IPR001128">
    <property type="entry name" value="Cyt_P450"/>
</dbReference>
<dbReference type="InterPro" id="IPR017972">
    <property type="entry name" value="Cyt_P450_CS"/>
</dbReference>
<dbReference type="InterPro" id="IPR002401">
    <property type="entry name" value="Cyt_P450_E_grp-I"/>
</dbReference>
<dbReference type="InterPro" id="IPR036396">
    <property type="entry name" value="Cyt_P450_sf"/>
</dbReference>
<dbReference type="InterPro" id="IPR050121">
    <property type="entry name" value="Cytochrome_P450_monoxygenase"/>
</dbReference>
<dbReference type="PANTHER" id="PTHR24305">
    <property type="entry name" value="CYTOCHROME P450"/>
    <property type="match status" value="1"/>
</dbReference>
<dbReference type="PANTHER" id="PTHR24305:SF210">
    <property type="entry name" value="CYTOCHROME P450 MONOOXYGENASE ASQL-RELATED"/>
    <property type="match status" value="1"/>
</dbReference>
<dbReference type="Pfam" id="PF00067">
    <property type="entry name" value="p450"/>
    <property type="match status" value="1"/>
</dbReference>
<dbReference type="PRINTS" id="PR00463">
    <property type="entry name" value="EP450I"/>
</dbReference>
<dbReference type="PRINTS" id="PR00385">
    <property type="entry name" value="P450"/>
</dbReference>
<dbReference type="SUPFAM" id="SSF48264">
    <property type="entry name" value="Cytochrome P450"/>
    <property type="match status" value="1"/>
</dbReference>
<dbReference type="PROSITE" id="PS00086">
    <property type="entry name" value="CYTOCHROME_P450"/>
    <property type="match status" value="1"/>
</dbReference>
<evidence type="ECO:0000250" key="1">
    <source>
        <dbReference type="UniProtKB" id="P04798"/>
    </source>
</evidence>
<evidence type="ECO:0000269" key="2">
    <source>
    </source>
</evidence>
<evidence type="ECO:0000303" key="3">
    <source>
    </source>
</evidence>
<evidence type="ECO:0000305" key="4"/>
<evidence type="ECO:0000305" key="5">
    <source>
    </source>
</evidence>
<feature type="chain" id="PRO_0000450117" description="Cytochrome P450 monooxygenase astJ">
    <location>
        <begin position="1"/>
        <end position="500"/>
    </location>
</feature>
<feature type="binding site" description="axial binding residue" evidence="1">
    <location>
        <position position="440"/>
    </location>
    <ligand>
        <name>heme</name>
        <dbReference type="ChEBI" id="CHEBI:30413"/>
    </ligand>
    <ligandPart>
        <name>Fe</name>
        <dbReference type="ChEBI" id="CHEBI:18248"/>
    </ligandPart>
</feature>
<reference key="1">
    <citation type="journal article" date="2005" name="Nature">
        <title>Genome sequencing and analysis of Aspergillus oryzae.</title>
        <authorList>
            <person name="Machida M."/>
            <person name="Asai K."/>
            <person name="Sano M."/>
            <person name="Tanaka T."/>
            <person name="Kumagai T."/>
            <person name="Terai G."/>
            <person name="Kusumoto K."/>
            <person name="Arima T."/>
            <person name="Akita O."/>
            <person name="Kashiwagi Y."/>
            <person name="Abe K."/>
            <person name="Gomi K."/>
            <person name="Horiuchi H."/>
            <person name="Kitamoto K."/>
            <person name="Kobayashi T."/>
            <person name="Takeuchi M."/>
            <person name="Denning D.W."/>
            <person name="Galagan J.E."/>
            <person name="Nierman W.C."/>
            <person name="Yu J."/>
            <person name="Archer D.B."/>
            <person name="Bennett J.W."/>
            <person name="Bhatnagar D."/>
            <person name="Cleveland T.E."/>
            <person name="Fedorova N.D."/>
            <person name="Gotoh O."/>
            <person name="Horikawa H."/>
            <person name="Hosoyama A."/>
            <person name="Ichinomiya M."/>
            <person name="Igarashi R."/>
            <person name="Iwashita K."/>
            <person name="Juvvadi P.R."/>
            <person name="Kato M."/>
            <person name="Kato Y."/>
            <person name="Kin T."/>
            <person name="Kokubun A."/>
            <person name="Maeda H."/>
            <person name="Maeyama N."/>
            <person name="Maruyama J."/>
            <person name="Nagasaki H."/>
            <person name="Nakajima T."/>
            <person name="Oda K."/>
            <person name="Okada K."/>
            <person name="Paulsen I."/>
            <person name="Sakamoto K."/>
            <person name="Sawano T."/>
            <person name="Takahashi M."/>
            <person name="Takase K."/>
            <person name="Terabayashi Y."/>
            <person name="Wortman J.R."/>
            <person name="Yamada O."/>
            <person name="Yamagata Y."/>
            <person name="Anazawa H."/>
            <person name="Hata Y."/>
            <person name="Koide Y."/>
            <person name="Komori T."/>
            <person name="Koyama Y."/>
            <person name="Minetoki T."/>
            <person name="Suharnan S."/>
            <person name="Tanaka A."/>
            <person name="Isono K."/>
            <person name="Kuhara S."/>
            <person name="Ogasawara N."/>
            <person name="Kikuchi H."/>
        </authorList>
    </citation>
    <scope>NUCLEOTIDE SEQUENCE [LARGE SCALE GENOMIC DNA]</scope>
    <source>
        <strain>ATCC 42149 / RIB 40</strain>
    </source>
</reference>
<reference key="2">
    <citation type="journal article" date="2016" name="Sci. Rep.">
        <title>Identification of a novel sesquiterpene biosynthetic machinery involved in astellolide biosynthesis.</title>
        <authorList>
            <person name="Shinohara Y."/>
            <person name="Takahashi S."/>
            <person name="Osada H."/>
            <person name="Koyama Y."/>
        </authorList>
    </citation>
    <scope>INDUCTION</scope>
    <scope>FUNCTION</scope>
    <scope>DISRUPTION PHENOTYPE</scope>
    <scope>PATHWAY</scope>
</reference>
<organism>
    <name type="scientific">Aspergillus oryzae (strain ATCC 42149 / RIB 40)</name>
    <name type="common">Yellow koji mold</name>
    <dbReference type="NCBI Taxonomy" id="510516"/>
    <lineage>
        <taxon>Eukaryota</taxon>
        <taxon>Fungi</taxon>
        <taxon>Dikarya</taxon>
        <taxon>Ascomycota</taxon>
        <taxon>Pezizomycotina</taxon>
        <taxon>Eurotiomycetes</taxon>
        <taxon>Eurotiomycetidae</taxon>
        <taxon>Eurotiales</taxon>
        <taxon>Aspergillaceae</taxon>
        <taxon>Aspergillus</taxon>
        <taxon>Aspergillus subgen. Circumdati</taxon>
    </lineage>
</organism>